<sequence>MTTTLTRPADGEGSVQVQQDASVRIQEGALVIAVYGKGGIGKSTTSSNLSAAFSKLGKRVLQIGCDPKHDSTFTLTHRMVPTVIDILEEVDFHSEELRPDDFMFEGFNGVKCVESGGPPAGTGCGGYVTGQTVKLLKEHHLLEDTDVVIFDVLGDVVCGGFAAPLQHANYCLIVTANDFDSIFAMNRIVAAINAKAKNYKVRLGGVIANRSAELDQIEKFNQQTGLKTMAHFKNVDAIRRSRLKKCTIFEMDSSDEGVMECQNEYLSLAQKMLDNVEPLEAEPLKDREIFDLLGFD</sequence>
<dbReference type="EC" id="1.3.7.7" evidence="1"/>
<dbReference type="EMBL" id="BX548175">
    <property type="protein sequence ID" value="CAE21392.1"/>
    <property type="molecule type" value="Genomic_DNA"/>
</dbReference>
<dbReference type="SMR" id="Q7V6E7"/>
<dbReference type="KEGG" id="pmt:PMT_1217"/>
<dbReference type="eggNOG" id="COG1348">
    <property type="taxonomic scope" value="Bacteria"/>
</dbReference>
<dbReference type="HOGENOM" id="CLU_059373_2_0_3"/>
<dbReference type="OrthoDB" id="9778641at2"/>
<dbReference type="UniPathway" id="UPA00670"/>
<dbReference type="Proteomes" id="UP000001423">
    <property type="component" value="Chromosome"/>
</dbReference>
<dbReference type="GO" id="GO:0051539">
    <property type="term" value="F:4 iron, 4 sulfur cluster binding"/>
    <property type="evidence" value="ECO:0007669"/>
    <property type="project" value="UniProtKB-UniRule"/>
</dbReference>
<dbReference type="GO" id="GO:0005524">
    <property type="term" value="F:ATP binding"/>
    <property type="evidence" value="ECO:0007669"/>
    <property type="project" value="UniProtKB-UniRule"/>
</dbReference>
<dbReference type="GO" id="GO:0046872">
    <property type="term" value="F:metal ion binding"/>
    <property type="evidence" value="ECO:0007669"/>
    <property type="project" value="UniProtKB-KW"/>
</dbReference>
<dbReference type="GO" id="GO:0016730">
    <property type="term" value="F:oxidoreductase activity, acting on iron-sulfur proteins as donors"/>
    <property type="evidence" value="ECO:0007669"/>
    <property type="project" value="InterPro"/>
</dbReference>
<dbReference type="GO" id="GO:0016636">
    <property type="term" value="F:oxidoreductase activity, acting on the CH-CH group of donors, iron-sulfur protein as acceptor"/>
    <property type="evidence" value="ECO:0007669"/>
    <property type="project" value="UniProtKB-UniRule"/>
</dbReference>
<dbReference type="GO" id="GO:0036068">
    <property type="term" value="P:light-independent chlorophyll biosynthetic process"/>
    <property type="evidence" value="ECO:0007669"/>
    <property type="project" value="UniProtKB-UniRule"/>
</dbReference>
<dbReference type="GO" id="GO:0019685">
    <property type="term" value="P:photosynthesis, dark reaction"/>
    <property type="evidence" value="ECO:0007669"/>
    <property type="project" value="InterPro"/>
</dbReference>
<dbReference type="CDD" id="cd02032">
    <property type="entry name" value="Bchl-like"/>
    <property type="match status" value="1"/>
</dbReference>
<dbReference type="Gene3D" id="3.40.50.300">
    <property type="entry name" value="P-loop containing nucleotide triphosphate hydrolases"/>
    <property type="match status" value="1"/>
</dbReference>
<dbReference type="HAMAP" id="MF_00355">
    <property type="entry name" value="ChlL_BchL"/>
    <property type="match status" value="1"/>
</dbReference>
<dbReference type="InterPro" id="IPR030655">
    <property type="entry name" value="NifH/chlL_CS"/>
</dbReference>
<dbReference type="InterPro" id="IPR000392">
    <property type="entry name" value="NifH/frxC"/>
</dbReference>
<dbReference type="InterPro" id="IPR027417">
    <property type="entry name" value="P-loop_NTPase"/>
</dbReference>
<dbReference type="InterPro" id="IPR005971">
    <property type="entry name" value="Protochlorophyllide_ATP-bd"/>
</dbReference>
<dbReference type="NCBIfam" id="TIGR01281">
    <property type="entry name" value="DPOR_bchL"/>
    <property type="match status" value="1"/>
</dbReference>
<dbReference type="PANTHER" id="PTHR42864">
    <property type="entry name" value="LIGHT-INDEPENDENT PROTOCHLOROPHYLLIDE REDUCTASE IRON-SULFUR ATP-BINDING PROTEIN"/>
    <property type="match status" value="1"/>
</dbReference>
<dbReference type="PANTHER" id="PTHR42864:SF2">
    <property type="entry name" value="LIGHT-INDEPENDENT PROTOCHLOROPHYLLIDE REDUCTASE IRON-SULFUR ATP-BINDING PROTEIN"/>
    <property type="match status" value="1"/>
</dbReference>
<dbReference type="Pfam" id="PF00142">
    <property type="entry name" value="Fer4_NifH"/>
    <property type="match status" value="1"/>
</dbReference>
<dbReference type="PIRSF" id="PIRSF000363">
    <property type="entry name" value="Nitrogenase_iron"/>
    <property type="match status" value="1"/>
</dbReference>
<dbReference type="PRINTS" id="PR00091">
    <property type="entry name" value="NITROGNASEII"/>
</dbReference>
<dbReference type="SUPFAM" id="SSF52540">
    <property type="entry name" value="P-loop containing nucleoside triphosphate hydrolases"/>
    <property type="match status" value="1"/>
</dbReference>
<dbReference type="PROSITE" id="PS00746">
    <property type="entry name" value="NIFH_FRXC_1"/>
    <property type="match status" value="1"/>
</dbReference>
<dbReference type="PROSITE" id="PS00692">
    <property type="entry name" value="NIFH_FRXC_2"/>
    <property type="match status" value="1"/>
</dbReference>
<dbReference type="PROSITE" id="PS51026">
    <property type="entry name" value="NIFH_FRXC_3"/>
    <property type="match status" value="1"/>
</dbReference>
<proteinExistence type="inferred from homology"/>
<reference key="1">
    <citation type="journal article" date="2003" name="Nature">
        <title>Genome divergence in two Prochlorococcus ecotypes reflects oceanic niche differentiation.</title>
        <authorList>
            <person name="Rocap G."/>
            <person name="Larimer F.W."/>
            <person name="Lamerdin J.E."/>
            <person name="Malfatti S."/>
            <person name="Chain P."/>
            <person name="Ahlgren N.A."/>
            <person name="Arellano A."/>
            <person name="Coleman M."/>
            <person name="Hauser L."/>
            <person name="Hess W.R."/>
            <person name="Johnson Z.I."/>
            <person name="Land M.L."/>
            <person name="Lindell D."/>
            <person name="Post A.F."/>
            <person name="Regala W."/>
            <person name="Shah M."/>
            <person name="Shaw S.L."/>
            <person name="Steglich C."/>
            <person name="Sullivan M.B."/>
            <person name="Ting C.S."/>
            <person name="Tolonen A."/>
            <person name="Webb E.A."/>
            <person name="Zinser E.R."/>
            <person name="Chisholm S.W."/>
        </authorList>
    </citation>
    <scope>NUCLEOTIDE SEQUENCE [LARGE SCALE GENOMIC DNA]</scope>
    <source>
        <strain>MIT 9313</strain>
    </source>
</reference>
<feature type="chain" id="PRO_0000324063" description="Light-independent protochlorophyllide reductase iron-sulfur ATP-binding protein">
    <location>
        <begin position="1"/>
        <end position="296"/>
    </location>
</feature>
<feature type="binding site" evidence="1">
    <location>
        <begin position="39"/>
        <end position="44"/>
    </location>
    <ligand>
        <name>ATP</name>
        <dbReference type="ChEBI" id="CHEBI:30616"/>
    </ligand>
</feature>
<feature type="binding site" evidence="1">
    <location>
        <position position="43"/>
    </location>
    <ligand>
        <name>Mg(2+)</name>
        <dbReference type="ChEBI" id="CHEBI:18420"/>
    </ligand>
</feature>
<feature type="binding site" evidence="1">
    <location>
        <position position="68"/>
    </location>
    <ligand>
        <name>ATP</name>
        <dbReference type="ChEBI" id="CHEBI:30616"/>
    </ligand>
</feature>
<feature type="binding site" evidence="1">
    <location>
        <position position="124"/>
    </location>
    <ligand>
        <name>[4Fe-4S] cluster</name>
        <dbReference type="ChEBI" id="CHEBI:49883"/>
        <note>ligand shared between dimeric partners</note>
    </ligand>
</feature>
<feature type="binding site" evidence="1">
    <location>
        <position position="158"/>
    </location>
    <ligand>
        <name>[4Fe-4S] cluster</name>
        <dbReference type="ChEBI" id="CHEBI:49883"/>
        <note>ligand shared between dimeric partners</note>
    </ligand>
</feature>
<feature type="binding site" evidence="1">
    <location>
        <begin position="209"/>
        <end position="210"/>
    </location>
    <ligand>
        <name>ATP</name>
        <dbReference type="ChEBI" id="CHEBI:30616"/>
    </ligand>
</feature>
<protein>
    <recommendedName>
        <fullName evidence="1">Light-independent protochlorophyllide reductase iron-sulfur ATP-binding protein</fullName>
        <shortName evidence="1">DPOR subunit L</shortName>
        <shortName evidence="1">LI-POR subunit L</shortName>
        <ecNumber evidence="1">1.3.7.7</ecNumber>
    </recommendedName>
</protein>
<accession>Q7V6E7</accession>
<comment type="function">
    <text evidence="1">Component of the dark-operative protochlorophyllide reductase (DPOR) that uses Mg-ATP and reduced ferredoxin to reduce ring D of protochlorophyllide (Pchlide) to form chlorophyllide a (Chlide). This reaction is light-independent. The L component serves as a unique electron donor to the NB-component of the complex, and binds Mg-ATP.</text>
</comment>
<comment type="catalytic activity">
    <reaction evidence="1">
        <text>chlorophyllide a + oxidized 2[4Fe-4S]-[ferredoxin] + 2 ADP + 2 phosphate = protochlorophyllide a + reduced 2[4Fe-4S]-[ferredoxin] + 2 ATP + 2 H2O</text>
        <dbReference type="Rhea" id="RHEA:28202"/>
        <dbReference type="Rhea" id="RHEA-COMP:10002"/>
        <dbReference type="Rhea" id="RHEA-COMP:10004"/>
        <dbReference type="ChEBI" id="CHEBI:15377"/>
        <dbReference type="ChEBI" id="CHEBI:30616"/>
        <dbReference type="ChEBI" id="CHEBI:33722"/>
        <dbReference type="ChEBI" id="CHEBI:33723"/>
        <dbReference type="ChEBI" id="CHEBI:43474"/>
        <dbReference type="ChEBI" id="CHEBI:83348"/>
        <dbReference type="ChEBI" id="CHEBI:83350"/>
        <dbReference type="ChEBI" id="CHEBI:456216"/>
        <dbReference type="EC" id="1.3.7.7"/>
    </reaction>
</comment>
<comment type="cofactor">
    <cofactor evidence="1">
        <name>[4Fe-4S] cluster</name>
        <dbReference type="ChEBI" id="CHEBI:49883"/>
    </cofactor>
    <text evidence="1">Binds 1 [4Fe-4S] cluster per dimer.</text>
</comment>
<comment type="pathway">
    <text evidence="1">Porphyrin-containing compound metabolism; chlorophyll biosynthesis (light-independent).</text>
</comment>
<comment type="subunit">
    <text evidence="1">Homodimer. Protochlorophyllide reductase is composed of three subunits; ChlL, ChlN and ChlB.</text>
</comment>
<comment type="similarity">
    <text evidence="1">Belongs to the NifH/BchL/ChlL family.</text>
</comment>
<organism>
    <name type="scientific">Prochlorococcus marinus (strain MIT 9313)</name>
    <dbReference type="NCBI Taxonomy" id="74547"/>
    <lineage>
        <taxon>Bacteria</taxon>
        <taxon>Bacillati</taxon>
        <taxon>Cyanobacteriota</taxon>
        <taxon>Cyanophyceae</taxon>
        <taxon>Synechococcales</taxon>
        <taxon>Prochlorococcaceae</taxon>
        <taxon>Prochlorococcus</taxon>
    </lineage>
</organism>
<keyword id="KW-0004">4Fe-4S</keyword>
<keyword id="KW-0067">ATP-binding</keyword>
<keyword id="KW-0149">Chlorophyll biosynthesis</keyword>
<keyword id="KW-0408">Iron</keyword>
<keyword id="KW-0411">Iron-sulfur</keyword>
<keyword id="KW-0460">Magnesium</keyword>
<keyword id="KW-0479">Metal-binding</keyword>
<keyword id="KW-0547">Nucleotide-binding</keyword>
<keyword id="KW-0560">Oxidoreductase</keyword>
<keyword id="KW-0602">Photosynthesis</keyword>
<keyword id="KW-1185">Reference proteome</keyword>
<name>CHLL_PROMM</name>
<evidence type="ECO:0000255" key="1">
    <source>
        <dbReference type="HAMAP-Rule" id="MF_00355"/>
    </source>
</evidence>
<gene>
    <name evidence="1" type="primary">chlL</name>
    <name type="ordered locus">PMT_1217</name>
</gene>